<protein>
    <recommendedName>
        <fullName>Uncharacterized protein YOL036W</fullName>
    </recommendedName>
</protein>
<sequence length="761" mass="84352">MEHQDSSPPRFRNSGSNRVTVYNGTTLPTMPKSATPTSSSTTVTTHLQNIKEEETNDDELTQVDRSSPRVLGRISSTSSSSSNIDLRDNLDMLHEIEKSNTNISLSAPNLHEELGVLSDKGNSKEELALLPPLPHTGEMEITPQFDINEAIFERDDISHSSRLEPDDVLTKLANSTRDATGEDQGFVVMTHGHDASTNDDSQLSATILDNQTSFDLSKALEMTSHSNISNIINSSGSEGRRSRTPVSNSTLKPNLSSPESAEREANTTSSSSTSDHGATMQYDPKKIITPIPVLPSSVREQQQNNAPLRERSRSNSSALASTLRDTIISGLPQNINSVERKLSRKSNRSRKNTVTFEDRLQKLPPLSTQISNQYAKVAPAENNIALHFHNLPTPVSNTQTPVTFQSESGLTGGEKKMPFLRRASSALLRKTSAKNCSNLTRTNTPTLSTSSTFESDLNARQPMLIRRSSTIDNKLPRRQLSCSKLYSRLNSDSKFANSSRASEEVLVSTPNDTEHVYRKTSLGSKIKRGFTRILSDSNNSKEILTLSPKSMVTTGPTELSFSSLSTVGGHPTTPVSKENDRVSIDGVSTFNRASTSLPESSTDDISPLREEGKINVPKRTSSRKILSKNSSKKNVLPEQQTKPSEIYLDKEALQSFVPVLSVTEGTHRINRSSLQTQSTIGLCITNLRNKEGMKLNAKEYVEILAQQQRKEDERYAVLERKFASCRWCSDKDLQYLKKKRISMNKIWSDYVRFYRGKLNNP</sequence>
<name>YO036_YEAST</name>
<feature type="chain" id="PRO_0000235921" description="Uncharacterized protein YOL036W">
    <location>
        <begin position="1"/>
        <end position="761"/>
    </location>
</feature>
<feature type="region of interest" description="Disordered" evidence="1">
    <location>
        <begin position="1"/>
        <end position="82"/>
    </location>
</feature>
<feature type="region of interest" description="Disordered" evidence="1">
    <location>
        <begin position="229"/>
        <end position="320"/>
    </location>
</feature>
<feature type="region of interest" description="Disordered" evidence="1">
    <location>
        <begin position="590"/>
        <end position="640"/>
    </location>
</feature>
<feature type="compositionally biased region" description="Polar residues" evidence="1">
    <location>
        <begin position="13"/>
        <end position="27"/>
    </location>
</feature>
<feature type="compositionally biased region" description="Low complexity" evidence="1">
    <location>
        <begin position="28"/>
        <end position="45"/>
    </location>
</feature>
<feature type="compositionally biased region" description="Polar residues" evidence="1">
    <location>
        <begin position="244"/>
        <end position="259"/>
    </location>
</feature>
<feature type="compositionally biased region" description="Polar residues" evidence="1">
    <location>
        <begin position="266"/>
        <end position="276"/>
    </location>
</feature>
<feature type="compositionally biased region" description="Polar residues" evidence="1">
    <location>
        <begin position="590"/>
        <end position="604"/>
    </location>
</feature>
<feature type="compositionally biased region" description="Polar residues" evidence="1">
    <location>
        <begin position="627"/>
        <end position="640"/>
    </location>
</feature>
<feature type="modified residue" description="N-acetylmethionine" evidence="3">
    <location>
        <position position="1"/>
    </location>
</feature>
<comment type="PTM">
    <text evidence="2">Phosphorylated by CDC28.</text>
</comment>
<proteinExistence type="evidence at protein level"/>
<gene>
    <name type="ordered locus">YOL036W</name>
</gene>
<accession>Q08206</accession>
<accession>D6W230</accession>
<evidence type="ECO:0000256" key="1">
    <source>
        <dbReference type="SAM" id="MobiDB-lite"/>
    </source>
</evidence>
<evidence type="ECO:0000269" key="2">
    <source>
    </source>
</evidence>
<evidence type="ECO:0007744" key="3">
    <source>
    </source>
</evidence>
<reference key="1">
    <citation type="journal article" date="1997" name="Nature">
        <title>The nucleotide sequence of Saccharomyces cerevisiae chromosome XV.</title>
        <authorList>
            <person name="Dujon B."/>
            <person name="Albermann K."/>
            <person name="Aldea M."/>
            <person name="Alexandraki D."/>
            <person name="Ansorge W."/>
            <person name="Arino J."/>
            <person name="Benes V."/>
            <person name="Bohn C."/>
            <person name="Bolotin-Fukuhara M."/>
            <person name="Bordonne R."/>
            <person name="Boyer J."/>
            <person name="Camasses A."/>
            <person name="Casamayor A."/>
            <person name="Casas C."/>
            <person name="Cheret G."/>
            <person name="Cziepluch C."/>
            <person name="Daignan-Fornier B."/>
            <person name="Dang V.-D."/>
            <person name="de Haan M."/>
            <person name="Delius H."/>
            <person name="Durand P."/>
            <person name="Fairhead C."/>
            <person name="Feldmann H."/>
            <person name="Gaillon L."/>
            <person name="Galisson F."/>
            <person name="Gamo F.-J."/>
            <person name="Gancedo C."/>
            <person name="Goffeau A."/>
            <person name="Goulding S.E."/>
            <person name="Grivell L.A."/>
            <person name="Habbig B."/>
            <person name="Hand N.J."/>
            <person name="Hani J."/>
            <person name="Hattenhorst U."/>
            <person name="Hebling U."/>
            <person name="Hernando Y."/>
            <person name="Herrero E."/>
            <person name="Heumann K."/>
            <person name="Hiesel R."/>
            <person name="Hilger F."/>
            <person name="Hofmann B."/>
            <person name="Hollenberg C.P."/>
            <person name="Hughes B."/>
            <person name="Jauniaux J.-C."/>
            <person name="Kalogeropoulos A."/>
            <person name="Katsoulou C."/>
            <person name="Kordes E."/>
            <person name="Lafuente M.J."/>
            <person name="Landt O."/>
            <person name="Louis E.J."/>
            <person name="Maarse A.C."/>
            <person name="Madania A."/>
            <person name="Mannhaupt G."/>
            <person name="Marck C."/>
            <person name="Martin R.P."/>
            <person name="Mewes H.-W."/>
            <person name="Michaux G."/>
            <person name="Paces V."/>
            <person name="Parle-McDermott A.G."/>
            <person name="Pearson B.M."/>
            <person name="Perrin A."/>
            <person name="Pettersson B."/>
            <person name="Poch O."/>
            <person name="Pohl T.M."/>
            <person name="Poirey R."/>
            <person name="Portetelle D."/>
            <person name="Pujol A."/>
            <person name="Purnelle B."/>
            <person name="Ramezani Rad M."/>
            <person name="Rechmann S."/>
            <person name="Schwager C."/>
            <person name="Schweizer M."/>
            <person name="Sor F."/>
            <person name="Sterky F."/>
            <person name="Tarassov I.A."/>
            <person name="Teodoru C."/>
            <person name="Tettelin H."/>
            <person name="Thierry A."/>
            <person name="Tobiasch E."/>
            <person name="Tzermia M."/>
            <person name="Uhlen M."/>
            <person name="Unseld M."/>
            <person name="Valens M."/>
            <person name="Vandenbol M."/>
            <person name="Vetter I."/>
            <person name="Vlcek C."/>
            <person name="Voet M."/>
            <person name="Volckaert G."/>
            <person name="Voss H."/>
            <person name="Wambutt R."/>
            <person name="Wedler H."/>
            <person name="Wiemann S."/>
            <person name="Winsor B."/>
            <person name="Wolfe K.H."/>
            <person name="Zollner A."/>
            <person name="Zumstein E."/>
            <person name="Kleine K."/>
        </authorList>
    </citation>
    <scope>NUCLEOTIDE SEQUENCE [LARGE SCALE GENOMIC DNA]</scope>
    <source>
        <strain>ATCC 204508 / S288c</strain>
    </source>
</reference>
<reference key="2">
    <citation type="journal article" date="2014" name="G3 (Bethesda)">
        <title>The reference genome sequence of Saccharomyces cerevisiae: Then and now.</title>
        <authorList>
            <person name="Engel S.R."/>
            <person name="Dietrich F.S."/>
            <person name="Fisk D.G."/>
            <person name="Binkley G."/>
            <person name="Balakrishnan R."/>
            <person name="Costanzo M.C."/>
            <person name="Dwight S.S."/>
            <person name="Hitz B.C."/>
            <person name="Karra K."/>
            <person name="Nash R.S."/>
            <person name="Weng S."/>
            <person name="Wong E.D."/>
            <person name="Lloyd P."/>
            <person name="Skrzypek M.S."/>
            <person name="Miyasato S.R."/>
            <person name="Simison M."/>
            <person name="Cherry J.M."/>
        </authorList>
    </citation>
    <scope>GENOME REANNOTATION</scope>
    <source>
        <strain>ATCC 204508 / S288c</strain>
    </source>
</reference>
<reference key="3">
    <citation type="journal article" date="2003" name="Nature">
        <title>Targets of the cyclin-dependent kinase Cdk1.</title>
        <authorList>
            <person name="Ubersax J.A."/>
            <person name="Woodbury E.L."/>
            <person name="Quang P.N."/>
            <person name="Paraz M."/>
            <person name="Blethrow J.D."/>
            <person name="Shah K."/>
            <person name="Shokat K.M."/>
            <person name="Morgan D.O."/>
        </authorList>
    </citation>
    <scope>PHOSPHORYLATION BY CDC28</scope>
</reference>
<reference key="4">
    <citation type="journal article" date="2008" name="Mol. Cell. Proteomics">
        <title>A multidimensional chromatography technology for in-depth phosphoproteome analysis.</title>
        <authorList>
            <person name="Albuquerque C.P."/>
            <person name="Smolka M.B."/>
            <person name="Payne S.H."/>
            <person name="Bafna V."/>
            <person name="Eng J."/>
            <person name="Zhou H."/>
        </authorList>
    </citation>
    <scope>IDENTIFICATION BY MASS SPECTROMETRY [LARGE SCALE ANALYSIS]</scope>
</reference>
<reference key="5">
    <citation type="journal article" date="2009" name="Science">
        <title>Global analysis of Cdk1 substrate phosphorylation sites provides insights into evolution.</title>
        <authorList>
            <person name="Holt L.J."/>
            <person name="Tuch B.B."/>
            <person name="Villen J."/>
            <person name="Johnson A.D."/>
            <person name="Gygi S.P."/>
            <person name="Morgan D.O."/>
        </authorList>
    </citation>
    <scope>IDENTIFICATION BY MASS SPECTROMETRY [LARGE SCALE ANALYSIS]</scope>
</reference>
<reference key="6">
    <citation type="journal article" date="2012" name="Proc. Natl. Acad. Sci. U.S.A.">
        <title>N-terminal acetylome analyses and functional insights of the N-terminal acetyltransferase NatB.</title>
        <authorList>
            <person name="Van Damme P."/>
            <person name="Lasa M."/>
            <person name="Polevoda B."/>
            <person name="Gazquez C."/>
            <person name="Elosegui-Artola A."/>
            <person name="Kim D.S."/>
            <person name="De Juan-Pardo E."/>
            <person name="Demeyer K."/>
            <person name="Hole K."/>
            <person name="Larrea E."/>
            <person name="Timmerman E."/>
            <person name="Prieto J."/>
            <person name="Arnesen T."/>
            <person name="Sherman F."/>
            <person name="Gevaert K."/>
            <person name="Aldabe R."/>
        </authorList>
    </citation>
    <scope>ACETYLATION [LARGE SCALE ANALYSIS] AT MET-1</scope>
    <scope>IDENTIFICATION BY MASS SPECTROMETRY [LARGE SCALE ANALYSIS]</scope>
</reference>
<keyword id="KW-0007">Acetylation</keyword>
<keyword id="KW-0597">Phosphoprotein</keyword>
<keyword id="KW-1185">Reference proteome</keyword>
<organism>
    <name type="scientific">Saccharomyces cerevisiae (strain ATCC 204508 / S288c)</name>
    <name type="common">Baker's yeast</name>
    <dbReference type="NCBI Taxonomy" id="559292"/>
    <lineage>
        <taxon>Eukaryota</taxon>
        <taxon>Fungi</taxon>
        <taxon>Dikarya</taxon>
        <taxon>Ascomycota</taxon>
        <taxon>Saccharomycotina</taxon>
        <taxon>Saccharomycetes</taxon>
        <taxon>Saccharomycetales</taxon>
        <taxon>Saccharomycetaceae</taxon>
        <taxon>Saccharomyces</taxon>
    </lineage>
</organism>
<dbReference type="EMBL" id="Z74779">
    <property type="protein sequence ID" value="CAA99038.1"/>
    <property type="molecule type" value="Genomic_DNA"/>
</dbReference>
<dbReference type="EMBL" id="BK006948">
    <property type="protein sequence ID" value="DAA10746.1"/>
    <property type="molecule type" value="Genomic_DNA"/>
</dbReference>
<dbReference type="PIR" id="S66719">
    <property type="entry name" value="S66719"/>
</dbReference>
<dbReference type="RefSeq" id="NP_014606.1">
    <property type="nucleotide sequence ID" value="NM_001183290.1"/>
</dbReference>
<dbReference type="SMR" id="Q08206"/>
<dbReference type="BioGRID" id="34365">
    <property type="interactions" value="135"/>
</dbReference>
<dbReference type="DIP" id="DIP-1450N"/>
<dbReference type="FunCoup" id="Q08206">
    <property type="interactions" value="80"/>
</dbReference>
<dbReference type="IntAct" id="Q08206">
    <property type="interactions" value="25"/>
</dbReference>
<dbReference type="MINT" id="Q08206"/>
<dbReference type="STRING" id="4932.YOL036W"/>
<dbReference type="GlyGen" id="Q08206">
    <property type="glycosylation" value="1 site, 1 O-linked glycan (1 site)"/>
</dbReference>
<dbReference type="iPTMnet" id="Q08206"/>
<dbReference type="PaxDb" id="4932-YOL036W"/>
<dbReference type="PeptideAtlas" id="Q08206"/>
<dbReference type="TopDownProteomics" id="Q08206"/>
<dbReference type="EnsemblFungi" id="YOL036W_mRNA">
    <property type="protein sequence ID" value="YOL036W"/>
    <property type="gene ID" value="YOL036W"/>
</dbReference>
<dbReference type="GeneID" id="854120"/>
<dbReference type="KEGG" id="sce:YOL036W"/>
<dbReference type="AGR" id="SGD:S000005396"/>
<dbReference type="SGD" id="S000005396">
    <property type="gene designation" value="YOL036W"/>
</dbReference>
<dbReference type="VEuPathDB" id="FungiDB:YOL036W"/>
<dbReference type="eggNOG" id="ENOG502S0J5">
    <property type="taxonomic scope" value="Eukaryota"/>
</dbReference>
<dbReference type="HOGENOM" id="CLU_368873_0_0_1"/>
<dbReference type="InParanoid" id="Q08206"/>
<dbReference type="OMA" id="KWAERIS"/>
<dbReference type="OrthoDB" id="4070760at2759"/>
<dbReference type="BioCyc" id="YEAST:G3O-33451-MONOMER"/>
<dbReference type="BioGRID-ORCS" id="854120">
    <property type="hits" value="5 hits in 10 CRISPR screens"/>
</dbReference>
<dbReference type="PRO" id="PR:Q08206"/>
<dbReference type="Proteomes" id="UP000002311">
    <property type="component" value="Chromosome XV"/>
</dbReference>
<dbReference type="RNAct" id="Q08206">
    <property type="molecule type" value="protein"/>
</dbReference>